<protein>
    <recommendedName>
        <fullName evidence="2">Exoribonuclease 2</fullName>
        <ecNumber evidence="2">3.1.13.1</ecNumber>
    </recommendedName>
    <alternativeName>
        <fullName evidence="2">Exoribonuclease II</fullName>
        <shortName evidence="2">RNase II</shortName>
        <shortName evidence="2">Ribonuclease II</shortName>
    </alternativeName>
</protein>
<gene>
    <name evidence="2" type="primary">rnb</name>
    <name type="ordered locus">VV2_0146</name>
</gene>
<reference key="1">
    <citation type="submission" date="2002-12" db="EMBL/GenBank/DDBJ databases">
        <title>Complete genome sequence of Vibrio vulnificus CMCP6.</title>
        <authorList>
            <person name="Rhee J.H."/>
            <person name="Kim S.Y."/>
            <person name="Chung S.S."/>
            <person name="Kim J.J."/>
            <person name="Moon Y.H."/>
            <person name="Jeong H."/>
            <person name="Choy H.E."/>
        </authorList>
    </citation>
    <scope>NUCLEOTIDE SEQUENCE [LARGE SCALE GENOMIC DNA]</scope>
    <source>
        <strain>CMCP6</strain>
    </source>
</reference>
<keyword id="KW-0963">Cytoplasm</keyword>
<keyword id="KW-0269">Exonuclease</keyword>
<keyword id="KW-0378">Hydrolase</keyword>
<keyword id="KW-0540">Nuclease</keyword>
<keyword id="KW-0694">RNA-binding</keyword>
<accession>Q8D7K6</accession>
<organism>
    <name type="scientific">Vibrio vulnificus (strain CMCP6)</name>
    <dbReference type="NCBI Taxonomy" id="216895"/>
    <lineage>
        <taxon>Bacteria</taxon>
        <taxon>Pseudomonadati</taxon>
        <taxon>Pseudomonadota</taxon>
        <taxon>Gammaproteobacteria</taxon>
        <taxon>Vibrionales</taxon>
        <taxon>Vibrionaceae</taxon>
        <taxon>Vibrio</taxon>
    </lineage>
</organism>
<sequence length="664" mass="75055">MFQDNPLLAQLKQQIQENLPKKEGTIKATEKGFGFLEVDSKTSFFIPPAYMKKCMHGDKVIAIIRTENEREVAEPQELVEQMLNRFIGRVKMFKGKLNVVPDHPQLKKMSLKAKTKKGLNPQEFAEGDWVVGHLIRHPLKDDNGFFVEISEKITDADDKIAPWWVTLAENDLPNSEPAGIDDWQIKDDADLERIDMTHIPFVTIDGESTKDMDDALYAKKNDAGDFELTIAIADPTAYITPDDEMDKVARERGFTIYLPGRNIPMLPRDLADELCSLIEGEIRPALCCTVTVSKDGVIGDDIQFFAANIKSHARLAYDNVSDWLETGSCEKWQPSEEIAAIVRDLYEFSQARAEWREKNAVVFPDRPDYRFELSEDNDVVAIHADMRRSANRLVEESMITANICAGKTLQGHFGTGVFNCHAGFKPEKIADVVELVNPEGTLEFTAESIATREGFAALRRWLSKQETTYLDNRIRKFQTYSEVSNQPLPHYAMGLDIYATWTSPIRKYGDMINHRMLKALILNKEPVQKPDDSVGEELALHRKHHKIAERNVADWLYARTLADAPENQTLFTGEIFDINRAGMRIRLLENGAAAFIPGSLIIDNKERIECNGDLGTVSIDKEVVYKLGDVLEVVLADVNQENRSLVAKPTQVFAELPVVEETQN</sequence>
<evidence type="ECO:0000255" key="1"/>
<evidence type="ECO:0000255" key="2">
    <source>
        <dbReference type="HAMAP-Rule" id="MF_01036"/>
    </source>
</evidence>
<feature type="chain" id="PRO_0000166392" description="Exoribonuclease 2">
    <location>
        <begin position="1"/>
        <end position="664"/>
    </location>
</feature>
<feature type="domain" description="RNB" evidence="1">
    <location>
        <begin position="193"/>
        <end position="521"/>
    </location>
</feature>
<feature type="domain" description="S1 motif" evidence="2">
    <location>
        <begin position="568"/>
        <end position="650"/>
    </location>
</feature>
<dbReference type="EC" id="3.1.13.1" evidence="2"/>
<dbReference type="EMBL" id="AE016796">
    <property type="protein sequence ID" value="AAO07119.1"/>
    <property type="molecule type" value="Genomic_DNA"/>
</dbReference>
<dbReference type="RefSeq" id="WP_011081128.1">
    <property type="nucleotide sequence ID" value="NC_004460.2"/>
</dbReference>
<dbReference type="SMR" id="Q8D7K6"/>
<dbReference type="KEGG" id="vvu:VV2_0146"/>
<dbReference type="HOGENOM" id="CLU_002333_7_3_6"/>
<dbReference type="Proteomes" id="UP000002275">
    <property type="component" value="Chromosome 2"/>
</dbReference>
<dbReference type="GO" id="GO:0005829">
    <property type="term" value="C:cytosol"/>
    <property type="evidence" value="ECO:0007669"/>
    <property type="project" value="TreeGrafter"/>
</dbReference>
<dbReference type="GO" id="GO:0008859">
    <property type="term" value="F:exoribonuclease II activity"/>
    <property type="evidence" value="ECO:0007669"/>
    <property type="project" value="UniProtKB-UniRule"/>
</dbReference>
<dbReference type="GO" id="GO:0003723">
    <property type="term" value="F:RNA binding"/>
    <property type="evidence" value="ECO:0007669"/>
    <property type="project" value="UniProtKB-KW"/>
</dbReference>
<dbReference type="GO" id="GO:0006402">
    <property type="term" value="P:mRNA catabolic process"/>
    <property type="evidence" value="ECO:0007669"/>
    <property type="project" value="UniProtKB-UniRule"/>
</dbReference>
<dbReference type="Gene3D" id="2.40.50.640">
    <property type="match status" value="1"/>
</dbReference>
<dbReference type="Gene3D" id="2.40.50.140">
    <property type="entry name" value="Nucleic acid-binding proteins"/>
    <property type="match status" value="2"/>
</dbReference>
<dbReference type="HAMAP" id="MF_01036">
    <property type="entry name" value="RNase_II"/>
    <property type="match status" value="1"/>
</dbReference>
<dbReference type="InterPro" id="IPR011129">
    <property type="entry name" value="CSD"/>
</dbReference>
<dbReference type="InterPro" id="IPR012340">
    <property type="entry name" value="NA-bd_OB-fold"/>
</dbReference>
<dbReference type="InterPro" id="IPR013223">
    <property type="entry name" value="RNase_B_OB_dom"/>
</dbReference>
<dbReference type="InterPro" id="IPR011804">
    <property type="entry name" value="RNase_II"/>
</dbReference>
<dbReference type="InterPro" id="IPR001900">
    <property type="entry name" value="RNase_II/R"/>
</dbReference>
<dbReference type="InterPro" id="IPR022966">
    <property type="entry name" value="RNase_II/R_CS"/>
</dbReference>
<dbReference type="InterPro" id="IPR004476">
    <property type="entry name" value="RNase_II/RNase_R"/>
</dbReference>
<dbReference type="InterPro" id="IPR050180">
    <property type="entry name" value="RNR_Ribonuclease"/>
</dbReference>
<dbReference type="InterPro" id="IPR003029">
    <property type="entry name" value="S1_domain"/>
</dbReference>
<dbReference type="NCBIfam" id="TIGR00358">
    <property type="entry name" value="3_prime_RNase"/>
    <property type="match status" value="1"/>
</dbReference>
<dbReference type="NCBIfam" id="NF003455">
    <property type="entry name" value="PRK05054.1"/>
    <property type="match status" value="1"/>
</dbReference>
<dbReference type="NCBIfam" id="TIGR02062">
    <property type="entry name" value="RNase_B"/>
    <property type="match status" value="1"/>
</dbReference>
<dbReference type="PANTHER" id="PTHR23355:SF37">
    <property type="entry name" value="EXORIBONUCLEASE 2"/>
    <property type="match status" value="1"/>
</dbReference>
<dbReference type="PANTHER" id="PTHR23355">
    <property type="entry name" value="RIBONUCLEASE"/>
    <property type="match status" value="1"/>
</dbReference>
<dbReference type="Pfam" id="PF08206">
    <property type="entry name" value="OB_RNB"/>
    <property type="match status" value="1"/>
</dbReference>
<dbReference type="Pfam" id="PF00773">
    <property type="entry name" value="RNB"/>
    <property type="match status" value="1"/>
</dbReference>
<dbReference type="Pfam" id="PF00575">
    <property type="entry name" value="S1"/>
    <property type="match status" value="1"/>
</dbReference>
<dbReference type="SMART" id="SM00357">
    <property type="entry name" value="CSP"/>
    <property type="match status" value="1"/>
</dbReference>
<dbReference type="SMART" id="SM00955">
    <property type="entry name" value="RNB"/>
    <property type="match status" value="1"/>
</dbReference>
<dbReference type="SMART" id="SM00316">
    <property type="entry name" value="S1"/>
    <property type="match status" value="1"/>
</dbReference>
<dbReference type="SUPFAM" id="SSF50249">
    <property type="entry name" value="Nucleic acid-binding proteins"/>
    <property type="match status" value="4"/>
</dbReference>
<dbReference type="PROSITE" id="PS01175">
    <property type="entry name" value="RIBONUCLEASE_II"/>
    <property type="match status" value="1"/>
</dbReference>
<dbReference type="PROSITE" id="PS50126">
    <property type="entry name" value="S1"/>
    <property type="match status" value="1"/>
</dbReference>
<proteinExistence type="inferred from homology"/>
<comment type="function">
    <text evidence="2">Involved in mRNA degradation. Hydrolyzes single-stranded polyribonucleotides processively in the 3' to 5' direction.</text>
</comment>
<comment type="catalytic activity">
    <reaction evidence="2">
        <text>Exonucleolytic cleavage in the 3'- to 5'-direction to yield nucleoside 5'-phosphates.</text>
        <dbReference type="EC" id="3.1.13.1"/>
    </reaction>
</comment>
<comment type="subcellular location">
    <subcellularLocation>
        <location evidence="2">Cytoplasm</location>
    </subcellularLocation>
</comment>
<comment type="similarity">
    <text evidence="2">Belongs to the RNR ribonuclease family. RNase II subfamily.</text>
</comment>
<name>RNB_VIBVU</name>